<organism>
    <name type="scientific">Yersinia pestis</name>
    <dbReference type="NCBI Taxonomy" id="632"/>
    <lineage>
        <taxon>Bacteria</taxon>
        <taxon>Pseudomonadati</taxon>
        <taxon>Pseudomonadota</taxon>
        <taxon>Gammaproteobacteria</taxon>
        <taxon>Enterobacterales</taxon>
        <taxon>Yersiniaceae</taxon>
        <taxon>Yersinia</taxon>
    </lineage>
</organism>
<proteinExistence type="inferred from homology"/>
<feature type="chain" id="PRO_0000207192" description="RNA polymerase-associated protein RapA">
    <location>
        <begin position="1"/>
        <end position="968"/>
    </location>
</feature>
<feature type="domain" description="Helicase ATP-binding" evidence="1">
    <location>
        <begin position="164"/>
        <end position="334"/>
    </location>
</feature>
<feature type="domain" description="Helicase C-terminal" evidence="1">
    <location>
        <begin position="490"/>
        <end position="644"/>
    </location>
</feature>
<feature type="short sequence motif" description="DEAH box">
    <location>
        <begin position="280"/>
        <end position="283"/>
    </location>
</feature>
<feature type="binding site" evidence="1">
    <location>
        <begin position="177"/>
        <end position="184"/>
    </location>
    <ligand>
        <name>ATP</name>
        <dbReference type="ChEBI" id="CHEBI:30616"/>
    </ligand>
</feature>
<dbReference type="EC" id="3.6.4.-" evidence="1"/>
<dbReference type="EMBL" id="AL590842">
    <property type="protein sequence ID" value="CAL19198.1"/>
    <property type="molecule type" value="Genomic_DNA"/>
</dbReference>
<dbReference type="EMBL" id="AE009952">
    <property type="protein sequence ID" value="AAM87204.1"/>
    <property type="molecule type" value="Genomic_DNA"/>
</dbReference>
<dbReference type="EMBL" id="AE017042">
    <property type="protein sequence ID" value="AAS63810.1"/>
    <property type="molecule type" value="Genomic_DNA"/>
</dbReference>
<dbReference type="PIR" id="AD0064">
    <property type="entry name" value="AD0064"/>
</dbReference>
<dbReference type="RefSeq" id="WP_002220588.1">
    <property type="nucleotide sequence ID" value="NZ_WUCM01000024.1"/>
</dbReference>
<dbReference type="RefSeq" id="YP_002345591.1">
    <property type="nucleotide sequence ID" value="NC_003143.1"/>
</dbReference>
<dbReference type="SMR" id="Q8ZII0"/>
<dbReference type="IntAct" id="Q8ZII0">
    <property type="interactions" value="4"/>
</dbReference>
<dbReference type="STRING" id="214092.YPO0517"/>
<dbReference type="PaxDb" id="214092-YPO0517"/>
<dbReference type="DNASU" id="1148603"/>
<dbReference type="EnsemblBacteria" id="AAS63810">
    <property type="protein sequence ID" value="AAS63810"/>
    <property type="gene ID" value="YP_3662"/>
</dbReference>
<dbReference type="GeneID" id="57974093"/>
<dbReference type="KEGG" id="ype:YPO0517"/>
<dbReference type="KEGG" id="ypk:y3656"/>
<dbReference type="KEGG" id="ypm:YP_3662"/>
<dbReference type="PATRIC" id="fig|214092.21.peg.770"/>
<dbReference type="eggNOG" id="COG0553">
    <property type="taxonomic scope" value="Bacteria"/>
</dbReference>
<dbReference type="HOGENOM" id="CLU_011520_0_0_6"/>
<dbReference type="OMA" id="MSILERD"/>
<dbReference type="OrthoDB" id="9814088at2"/>
<dbReference type="Proteomes" id="UP000000815">
    <property type="component" value="Chromosome"/>
</dbReference>
<dbReference type="Proteomes" id="UP000001019">
    <property type="component" value="Chromosome"/>
</dbReference>
<dbReference type="Proteomes" id="UP000002490">
    <property type="component" value="Chromosome"/>
</dbReference>
<dbReference type="GO" id="GO:0005524">
    <property type="term" value="F:ATP binding"/>
    <property type="evidence" value="ECO:0007669"/>
    <property type="project" value="UniProtKB-UniRule"/>
</dbReference>
<dbReference type="GO" id="GO:0003682">
    <property type="term" value="F:chromatin binding"/>
    <property type="evidence" value="ECO:0000318"/>
    <property type="project" value="GO_Central"/>
</dbReference>
<dbReference type="GO" id="GO:0003677">
    <property type="term" value="F:DNA binding"/>
    <property type="evidence" value="ECO:0000318"/>
    <property type="project" value="GO_Central"/>
</dbReference>
<dbReference type="GO" id="GO:0004386">
    <property type="term" value="F:helicase activity"/>
    <property type="evidence" value="ECO:0007669"/>
    <property type="project" value="UniProtKB-UniRule"/>
</dbReference>
<dbReference type="GO" id="GO:0016817">
    <property type="term" value="F:hydrolase activity, acting on acid anhydrides"/>
    <property type="evidence" value="ECO:0007669"/>
    <property type="project" value="InterPro"/>
</dbReference>
<dbReference type="GO" id="GO:0140750">
    <property type="term" value="F:nucleosome array spacer activity"/>
    <property type="evidence" value="ECO:0000318"/>
    <property type="project" value="GO_Central"/>
</dbReference>
<dbReference type="GO" id="GO:0045944">
    <property type="term" value="P:positive regulation of transcription by RNA polymerase II"/>
    <property type="evidence" value="ECO:0000318"/>
    <property type="project" value="GO_Central"/>
</dbReference>
<dbReference type="CDD" id="cd18011">
    <property type="entry name" value="DEXDc_RapA"/>
    <property type="match status" value="1"/>
</dbReference>
<dbReference type="CDD" id="cd18793">
    <property type="entry name" value="SF2_C_SNF"/>
    <property type="match status" value="1"/>
</dbReference>
<dbReference type="FunFam" id="3.40.50.10810:FF:000012">
    <property type="entry name" value="RNA polymerase-associated protein RapA"/>
    <property type="match status" value="1"/>
</dbReference>
<dbReference type="Gene3D" id="2.30.30.140">
    <property type="match status" value="1"/>
</dbReference>
<dbReference type="Gene3D" id="2.30.30.930">
    <property type="match status" value="1"/>
</dbReference>
<dbReference type="Gene3D" id="3.30.360.80">
    <property type="match status" value="1"/>
</dbReference>
<dbReference type="Gene3D" id="6.10.140.1500">
    <property type="match status" value="1"/>
</dbReference>
<dbReference type="Gene3D" id="6.10.140.2230">
    <property type="match status" value="1"/>
</dbReference>
<dbReference type="Gene3D" id="3.40.50.300">
    <property type="entry name" value="P-loop containing nucleotide triphosphate hydrolases"/>
    <property type="match status" value="1"/>
</dbReference>
<dbReference type="Gene3D" id="3.40.50.10810">
    <property type="entry name" value="Tandem AAA-ATPase domain"/>
    <property type="match status" value="1"/>
</dbReference>
<dbReference type="HAMAP" id="MF_01821">
    <property type="entry name" value="Helicase_RapA"/>
    <property type="match status" value="1"/>
</dbReference>
<dbReference type="InterPro" id="IPR014001">
    <property type="entry name" value="Helicase_ATP-bd"/>
</dbReference>
<dbReference type="InterPro" id="IPR001650">
    <property type="entry name" value="Helicase_C-like"/>
</dbReference>
<dbReference type="InterPro" id="IPR023949">
    <property type="entry name" value="Helicase_RapA"/>
</dbReference>
<dbReference type="InterPro" id="IPR027417">
    <property type="entry name" value="P-loop_NTPase"/>
</dbReference>
<dbReference type="InterPro" id="IPR022737">
    <property type="entry name" value="RapA_C"/>
</dbReference>
<dbReference type="InterPro" id="IPR038718">
    <property type="entry name" value="SNF2-like_sf"/>
</dbReference>
<dbReference type="InterPro" id="IPR049730">
    <property type="entry name" value="SNF2/RAD54-like_C"/>
</dbReference>
<dbReference type="InterPro" id="IPR000330">
    <property type="entry name" value="SNF2_N"/>
</dbReference>
<dbReference type="InterPro" id="IPR040765">
    <property type="entry name" value="Tudor_1_RapA"/>
</dbReference>
<dbReference type="InterPro" id="IPR040766">
    <property type="entry name" value="Tudor_2_RapA"/>
</dbReference>
<dbReference type="NCBIfam" id="NF003426">
    <property type="entry name" value="PRK04914.1"/>
    <property type="match status" value="1"/>
</dbReference>
<dbReference type="PANTHER" id="PTHR45766">
    <property type="entry name" value="DNA ANNEALING HELICASE AND ENDONUCLEASE ZRANB3 FAMILY MEMBER"/>
    <property type="match status" value="1"/>
</dbReference>
<dbReference type="PANTHER" id="PTHR45766:SF6">
    <property type="entry name" value="SWI_SNF-RELATED MATRIX-ASSOCIATED ACTIN-DEPENDENT REGULATOR OF CHROMATIN SUBFAMILY A-LIKE PROTEIN 1"/>
    <property type="match status" value="1"/>
</dbReference>
<dbReference type="Pfam" id="PF00271">
    <property type="entry name" value="Helicase_C"/>
    <property type="match status" value="1"/>
</dbReference>
<dbReference type="Pfam" id="PF12137">
    <property type="entry name" value="RapA_C"/>
    <property type="match status" value="1"/>
</dbReference>
<dbReference type="Pfam" id="PF00176">
    <property type="entry name" value="SNF2-rel_dom"/>
    <property type="match status" value="1"/>
</dbReference>
<dbReference type="Pfam" id="PF18339">
    <property type="entry name" value="Tudor_1_RapA"/>
    <property type="match status" value="1"/>
</dbReference>
<dbReference type="Pfam" id="PF18337">
    <property type="entry name" value="Tudor_RapA"/>
    <property type="match status" value="1"/>
</dbReference>
<dbReference type="SMART" id="SM00487">
    <property type="entry name" value="DEXDc"/>
    <property type="match status" value="1"/>
</dbReference>
<dbReference type="SMART" id="SM00490">
    <property type="entry name" value="HELICc"/>
    <property type="match status" value="1"/>
</dbReference>
<dbReference type="SUPFAM" id="SSF52540">
    <property type="entry name" value="P-loop containing nucleoside triphosphate hydrolases"/>
    <property type="match status" value="2"/>
</dbReference>
<dbReference type="PROSITE" id="PS51192">
    <property type="entry name" value="HELICASE_ATP_BIND_1"/>
    <property type="match status" value="1"/>
</dbReference>
<dbReference type="PROSITE" id="PS51194">
    <property type="entry name" value="HELICASE_CTER"/>
    <property type="match status" value="1"/>
</dbReference>
<reference key="1">
    <citation type="journal article" date="2001" name="Nature">
        <title>Genome sequence of Yersinia pestis, the causative agent of plague.</title>
        <authorList>
            <person name="Parkhill J."/>
            <person name="Wren B.W."/>
            <person name="Thomson N.R."/>
            <person name="Titball R.W."/>
            <person name="Holden M.T.G."/>
            <person name="Prentice M.B."/>
            <person name="Sebaihia M."/>
            <person name="James K.D."/>
            <person name="Churcher C.M."/>
            <person name="Mungall K.L."/>
            <person name="Baker S."/>
            <person name="Basham D."/>
            <person name="Bentley S.D."/>
            <person name="Brooks K."/>
            <person name="Cerdeno-Tarraga A.-M."/>
            <person name="Chillingworth T."/>
            <person name="Cronin A."/>
            <person name="Davies R.M."/>
            <person name="Davis P."/>
            <person name="Dougan G."/>
            <person name="Feltwell T."/>
            <person name="Hamlin N."/>
            <person name="Holroyd S."/>
            <person name="Jagels K."/>
            <person name="Karlyshev A.V."/>
            <person name="Leather S."/>
            <person name="Moule S."/>
            <person name="Oyston P.C.F."/>
            <person name="Quail M.A."/>
            <person name="Rutherford K.M."/>
            <person name="Simmonds M."/>
            <person name="Skelton J."/>
            <person name="Stevens K."/>
            <person name="Whitehead S."/>
            <person name="Barrell B.G."/>
        </authorList>
    </citation>
    <scope>NUCLEOTIDE SEQUENCE [LARGE SCALE GENOMIC DNA]</scope>
    <source>
        <strain>CO-92 / Biovar Orientalis</strain>
    </source>
</reference>
<reference key="2">
    <citation type="journal article" date="2002" name="J. Bacteriol.">
        <title>Genome sequence of Yersinia pestis KIM.</title>
        <authorList>
            <person name="Deng W."/>
            <person name="Burland V."/>
            <person name="Plunkett G. III"/>
            <person name="Boutin A."/>
            <person name="Mayhew G.F."/>
            <person name="Liss P."/>
            <person name="Perna N.T."/>
            <person name="Rose D.J."/>
            <person name="Mau B."/>
            <person name="Zhou S."/>
            <person name="Schwartz D.C."/>
            <person name="Fetherston J.D."/>
            <person name="Lindler L.E."/>
            <person name="Brubaker R.R."/>
            <person name="Plano G.V."/>
            <person name="Straley S.C."/>
            <person name="McDonough K.A."/>
            <person name="Nilles M.L."/>
            <person name="Matson J.S."/>
            <person name="Blattner F.R."/>
            <person name="Perry R.D."/>
        </authorList>
    </citation>
    <scope>NUCLEOTIDE SEQUENCE [LARGE SCALE GENOMIC DNA]</scope>
    <source>
        <strain>KIM10+ / Biovar Mediaevalis</strain>
    </source>
</reference>
<reference key="3">
    <citation type="journal article" date="2004" name="DNA Res.">
        <title>Complete genome sequence of Yersinia pestis strain 91001, an isolate avirulent to humans.</title>
        <authorList>
            <person name="Song Y."/>
            <person name="Tong Z."/>
            <person name="Wang J."/>
            <person name="Wang L."/>
            <person name="Guo Z."/>
            <person name="Han Y."/>
            <person name="Zhang J."/>
            <person name="Pei D."/>
            <person name="Zhou D."/>
            <person name="Qin H."/>
            <person name="Pang X."/>
            <person name="Han Y."/>
            <person name="Zhai J."/>
            <person name="Li M."/>
            <person name="Cui B."/>
            <person name="Qi Z."/>
            <person name="Jin L."/>
            <person name="Dai R."/>
            <person name="Chen F."/>
            <person name="Li S."/>
            <person name="Ye C."/>
            <person name="Du Z."/>
            <person name="Lin W."/>
            <person name="Wang J."/>
            <person name="Yu J."/>
            <person name="Yang H."/>
            <person name="Wang J."/>
            <person name="Huang P."/>
            <person name="Yang R."/>
        </authorList>
    </citation>
    <scope>NUCLEOTIDE SEQUENCE [LARGE SCALE GENOMIC DNA]</scope>
    <source>
        <strain>91001 / Biovar Mediaevalis</strain>
    </source>
</reference>
<protein>
    <recommendedName>
        <fullName evidence="1">RNA polymerase-associated protein RapA</fullName>
        <ecNumber evidence="1">3.6.4.-</ecNumber>
    </recommendedName>
    <alternativeName>
        <fullName evidence="1">ATP-dependent helicase HepA</fullName>
    </alternativeName>
</protein>
<accession>Q8ZII0</accession>
<accession>Q0WJE7</accession>
<gene>
    <name evidence="1" type="primary">rapA</name>
    <name type="synonym">hepA</name>
    <name type="ordered locus">YPO0517</name>
    <name type="ordered locus">y3656</name>
    <name type="ordered locus">YP_3662</name>
</gene>
<keyword id="KW-0010">Activator</keyword>
<keyword id="KW-0067">ATP-binding</keyword>
<keyword id="KW-0238">DNA-binding</keyword>
<keyword id="KW-0347">Helicase</keyword>
<keyword id="KW-0378">Hydrolase</keyword>
<keyword id="KW-0547">Nucleotide-binding</keyword>
<keyword id="KW-1185">Reference proteome</keyword>
<keyword id="KW-0804">Transcription</keyword>
<keyword id="KW-0805">Transcription regulation</keyword>
<name>RAPA_YERPE</name>
<evidence type="ECO:0000255" key="1">
    <source>
        <dbReference type="HAMAP-Rule" id="MF_01821"/>
    </source>
</evidence>
<sequence length="968" mass="110127">MPFTLGQRWISDTESELGLGTVVAIDVRMITLLFPATGENRLYARNDSPITRVMFNPSDTITHHEGWQLKVEEVTQENGLITYIGTRLDTEETGVAMREVLLDSKLTFSKPQDRLFAGQIDRMDRFALRFRARKYQSEQFRLPWSGLRGIRASLIPHQLHIAYEVGQRHAPRVLLADEVGLGKTIEAGMIIHQQLLAGRAERVLIVVPESLQHQWLVEMLRRFNLRFSLFDDSRYSEALLDSSNPFDTEQMVICSLDFVRRNKQRLEQLADASWDLLVVDEAHHMAWSEEAPSREYQVIEQLAEHIPGVLLLTATPEQLGQQSHFARLRLLDPDRFHDYEEFVNEQQKYRPIADAVTLLLGGERLTDDKLNLLGELIDEQDIEPLLKAANSQSEDSEAARQELVTMLMDRHGTSRVLFRNTRNGVKGFPHRVLHQIKLPLPTQYQTAIKVSGIMGAKKTLDARAKDMLYPEQIYQEFEGENATWWNFDPRVEWLLNYLVANRGEKVLVICAQAATALQLEQVLREREAIRAAVFHEGLSLIERDRAAAYFASEEDGAQVLLCSEIGSEGRNFQFACQLVMFDLPFNPDLLEQRIGRLDRIGQNREIQIMVPYLEDTAQAILVRWYHEGLDAFEHTCPTGRTIYDSSYQELISYLATPSEQEGLDEFIHTCRQQHEGLKLQLEQGRDRLLEMHSNGGEHGQELAQSIAEQDNDINLVSFALNLFDIVGINQEDRSDNLIVLTPSDHMLVPDFPGLPPDGCTVTFDREQALSREDAQFVSWEHPIIRNGLDLILSGDTGSCAVSLLKNKALPVGTLLAELVYVVEAQAPKHLQLTRFLPPTPVRMLMDRNGTNLAAQVEFESFNRQLNAVNRHTSSKLVNAVQQEVHTMLQQAEALVEAQAQALIETAKREADDKLSTELARLEALKAVNPNIRDDEIEALEHNRKMVLENLNQAGWRLDAIRLVVVTHQ</sequence>
<comment type="function">
    <text evidence="1">Transcription regulator that activates transcription by stimulating RNA polymerase (RNAP) recycling in case of stress conditions such as supercoiled DNA or high salt concentrations. Probably acts by releasing the RNAP, when it is trapped or immobilized on tightly supercoiled DNA. Does not activate transcription on linear DNA. Probably not involved in DNA repair.</text>
</comment>
<comment type="subunit">
    <text evidence="1">Interacts with the RNAP. Has a higher affinity for the core RNAP than for the holoenzyme. Its ATPase activity is stimulated by binding to RNAP.</text>
</comment>
<comment type="similarity">
    <text evidence="1">Belongs to the SNF2/RAD54 helicase family. RapA subfamily.</text>
</comment>